<sequence>MKIYSIAILRNSGNKALELCSAKDLSQFGFFERNGVSQFMTFFGETVAGRTGAGQRQSIEEGNYVGHVYSRSEGLCGVLITDKEYPVRPAYTLLNKVLDEYLVAHPPAEWRDIAQTSDQLKLRELEMYLAKYQDPSQADSIMRVQQELDETKIVLHKTIESVLQRGEKLDNLVDKSESLSASSRMFYKQAKKTNSCCLIM</sequence>
<feature type="chain" id="PRO_0000206774" description="Synaptobrevin homolog YKT6">
    <location>
        <begin position="1"/>
        <end position="197"/>
    </location>
</feature>
<feature type="propeptide" id="PRO_0000396669" description="Removed in mature form" evidence="1">
    <location>
        <begin position="198"/>
        <end position="200"/>
    </location>
</feature>
<feature type="domain" description="Longin" evidence="2">
    <location>
        <begin position="7"/>
        <end position="126"/>
    </location>
</feature>
<feature type="domain" description="v-SNARE coiled-coil homology" evidence="3">
    <location>
        <begin position="140"/>
        <end position="200"/>
    </location>
</feature>
<feature type="modified residue" description="Cysteine methyl ester" evidence="1">
    <location>
        <position position="197"/>
    </location>
</feature>
<feature type="lipid moiety-binding region" description="S-palmitoyl cysteine" evidence="1">
    <location>
        <position position="196"/>
    </location>
</feature>
<feature type="lipid moiety-binding region" description="S-farnesyl cysteine" evidence="1">
    <location>
        <position position="197"/>
    </location>
</feature>
<keyword id="KW-1003">Cell membrane</keyword>
<keyword id="KW-0175">Coiled coil</keyword>
<keyword id="KW-0449">Lipoprotein</keyword>
<keyword id="KW-0472">Membrane</keyword>
<keyword id="KW-0488">Methylation</keyword>
<keyword id="KW-0564">Palmitate</keyword>
<keyword id="KW-0636">Prenylation</keyword>
<keyword id="KW-1185">Reference proteome</keyword>
<gene>
    <name type="primary">YKT6</name>
    <name type="ordered locus">AER109W</name>
</gene>
<organism>
    <name type="scientific">Eremothecium gossypii (strain ATCC 10895 / CBS 109.51 / FGSC 9923 / NRRL Y-1056)</name>
    <name type="common">Yeast</name>
    <name type="synonym">Ashbya gossypii</name>
    <dbReference type="NCBI Taxonomy" id="284811"/>
    <lineage>
        <taxon>Eukaryota</taxon>
        <taxon>Fungi</taxon>
        <taxon>Dikarya</taxon>
        <taxon>Ascomycota</taxon>
        <taxon>Saccharomycotina</taxon>
        <taxon>Saccharomycetes</taxon>
        <taxon>Saccharomycetales</taxon>
        <taxon>Saccharomycetaceae</taxon>
        <taxon>Eremothecium</taxon>
    </lineage>
</organism>
<dbReference type="EMBL" id="AE016818">
    <property type="protein sequence ID" value="AAS52793.1"/>
    <property type="molecule type" value="Genomic_DNA"/>
</dbReference>
<dbReference type="RefSeq" id="NP_984969.1">
    <property type="nucleotide sequence ID" value="NM_210323.1"/>
</dbReference>
<dbReference type="SMR" id="Q757A4"/>
<dbReference type="FunCoup" id="Q757A4">
    <property type="interactions" value="1332"/>
</dbReference>
<dbReference type="STRING" id="284811.Q757A4"/>
<dbReference type="EnsemblFungi" id="AAS52793">
    <property type="protein sequence ID" value="AAS52793"/>
    <property type="gene ID" value="AGOS_AER109W"/>
</dbReference>
<dbReference type="GeneID" id="4621174"/>
<dbReference type="KEGG" id="ago:AGOS_AER109W"/>
<dbReference type="eggNOG" id="KOG0861">
    <property type="taxonomic scope" value="Eukaryota"/>
</dbReference>
<dbReference type="HOGENOM" id="CLU_074848_0_1_1"/>
<dbReference type="InParanoid" id="Q757A4"/>
<dbReference type="OMA" id="HYIGIIR"/>
<dbReference type="OrthoDB" id="27923at2759"/>
<dbReference type="Proteomes" id="UP000000591">
    <property type="component" value="Chromosome V"/>
</dbReference>
<dbReference type="GO" id="GO:0000421">
    <property type="term" value="C:autophagosome membrane"/>
    <property type="evidence" value="ECO:0007669"/>
    <property type="project" value="EnsemblFungi"/>
</dbReference>
<dbReference type="GO" id="GO:0005768">
    <property type="term" value="C:endosome"/>
    <property type="evidence" value="ECO:0007669"/>
    <property type="project" value="EnsemblFungi"/>
</dbReference>
<dbReference type="GO" id="GO:0000324">
    <property type="term" value="C:fungal-type vacuole"/>
    <property type="evidence" value="ECO:0007669"/>
    <property type="project" value="EnsemblFungi"/>
</dbReference>
<dbReference type="GO" id="GO:0005794">
    <property type="term" value="C:Golgi apparatus"/>
    <property type="evidence" value="ECO:0000318"/>
    <property type="project" value="GO_Central"/>
</dbReference>
<dbReference type="GO" id="GO:0005886">
    <property type="term" value="C:plasma membrane"/>
    <property type="evidence" value="ECO:0007669"/>
    <property type="project" value="UniProtKB-SubCell"/>
</dbReference>
<dbReference type="GO" id="GO:0031201">
    <property type="term" value="C:SNARE complex"/>
    <property type="evidence" value="ECO:0007669"/>
    <property type="project" value="EnsemblFungi"/>
</dbReference>
<dbReference type="GO" id="GO:0016409">
    <property type="term" value="F:palmitoyltransferase activity"/>
    <property type="evidence" value="ECO:0007669"/>
    <property type="project" value="EnsemblFungi"/>
</dbReference>
<dbReference type="GO" id="GO:0005484">
    <property type="term" value="F:SNAP receptor activity"/>
    <property type="evidence" value="ECO:0000318"/>
    <property type="project" value="GO_Central"/>
</dbReference>
<dbReference type="GO" id="GO:0061909">
    <property type="term" value="P:autophagosome-lysosome fusion"/>
    <property type="evidence" value="ECO:0007669"/>
    <property type="project" value="EnsemblFungi"/>
</dbReference>
<dbReference type="GO" id="GO:0006888">
    <property type="term" value="P:endoplasmic reticulum to Golgi vesicle-mediated transport"/>
    <property type="evidence" value="ECO:0000318"/>
    <property type="project" value="GO_Central"/>
</dbReference>
<dbReference type="GO" id="GO:0006891">
    <property type="term" value="P:intra-Golgi vesicle-mediated transport"/>
    <property type="evidence" value="ECO:0007669"/>
    <property type="project" value="EnsemblFungi"/>
</dbReference>
<dbReference type="GO" id="GO:0006886">
    <property type="term" value="P:intracellular protein transport"/>
    <property type="evidence" value="ECO:0007669"/>
    <property type="project" value="EnsemblFungi"/>
</dbReference>
<dbReference type="GO" id="GO:0042144">
    <property type="term" value="P:vacuole fusion, non-autophagic"/>
    <property type="evidence" value="ECO:0007669"/>
    <property type="project" value="EnsemblFungi"/>
</dbReference>
<dbReference type="CDD" id="cd14824">
    <property type="entry name" value="Longin"/>
    <property type="match status" value="1"/>
</dbReference>
<dbReference type="CDD" id="cd15867">
    <property type="entry name" value="R-SNARE_YKT6"/>
    <property type="match status" value="1"/>
</dbReference>
<dbReference type="FunFam" id="3.30.450.50:FF:000020">
    <property type="entry name" value="Synaptobrevin homolog YKT6"/>
    <property type="match status" value="1"/>
</dbReference>
<dbReference type="FunFam" id="1.20.5.110:FF:000020">
    <property type="entry name" value="synaptobrevin homolog YKT6"/>
    <property type="match status" value="1"/>
</dbReference>
<dbReference type="Gene3D" id="1.20.5.110">
    <property type="match status" value="1"/>
</dbReference>
<dbReference type="Gene3D" id="3.30.450.50">
    <property type="entry name" value="Longin domain"/>
    <property type="match status" value="1"/>
</dbReference>
<dbReference type="InterPro" id="IPR011012">
    <property type="entry name" value="Longin-like_dom_sf"/>
</dbReference>
<dbReference type="InterPro" id="IPR010908">
    <property type="entry name" value="Longin_dom"/>
</dbReference>
<dbReference type="InterPro" id="IPR045848">
    <property type="entry name" value="R-SNARE_YKT6"/>
</dbReference>
<dbReference type="InterPro" id="IPR001388">
    <property type="entry name" value="Synaptobrevin-like"/>
</dbReference>
<dbReference type="InterPro" id="IPR042855">
    <property type="entry name" value="V_SNARE_CC"/>
</dbReference>
<dbReference type="PANTHER" id="PTHR45806">
    <property type="entry name" value="SYNAPTOBREVIN HOMOLOG YKT6"/>
    <property type="match status" value="1"/>
</dbReference>
<dbReference type="PANTHER" id="PTHR45806:SF1">
    <property type="entry name" value="SYNAPTOBREVIN HOMOLOG YKT6"/>
    <property type="match status" value="1"/>
</dbReference>
<dbReference type="Pfam" id="PF13774">
    <property type="entry name" value="Longin"/>
    <property type="match status" value="1"/>
</dbReference>
<dbReference type="Pfam" id="PF00957">
    <property type="entry name" value="Synaptobrevin"/>
    <property type="match status" value="1"/>
</dbReference>
<dbReference type="PRINTS" id="PR00219">
    <property type="entry name" value="SYNAPTOBREVN"/>
</dbReference>
<dbReference type="SMART" id="SM01270">
    <property type="entry name" value="Longin"/>
    <property type="match status" value="1"/>
</dbReference>
<dbReference type="SUPFAM" id="SSF58038">
    <property type="entry name" value="SNARE fusion complex"/>
    <property type="match status" value="1"/>
</dbReference>
<dbReference type="SUPFAM" id="SSF64356">
    <property type="entry name" value="SNARE-like"/>
    <property type="match status" value="1"/>
</dbReference>
<dbReference type="PROSITE" id="PS50859">
    <property type="entry name" value="LONGIN"/>
    <property type="match status" value="1"/>
</dbReference>
<dbReference type="PROSITE" id="PS00417">
    <property type="entry name" value="SYNAPTOBREVIN"/>
    <property type="match status" value="1"/>
</dbReference>
<dbReference type="PROSITE" id="PS50892">
    <property type="entry name" value="V_SNARE"/>
    <property type="match status" value="1"/>
</dbReference>
<evidence type="ECO:0000250" key="1"/>
<evidence type="ECO:0000255" key="2">
    <source>
        <dbReference type="PROSITE-ProRule" id="PRU00231"/>
    </source>
</evidence>
<evidence type="ECO:0000255" key="3">
    <source>
        <dbReference type="PROSITE-ProRule" id="PRU00290"/>
    </source>
</evidence>
<evidence type="ECO:0000305" key="4"/>
<proteinExistence type="inferred from homology"/>
<name>YKT6_EREGS</name>
<protein>
    <recommendedName>
        <fullName>Synaptobrevin homolog YKT6</fullName>
    </recommendedName>
</protein>
<accession>Q757A4</accession>
<comment type="subcellular location">
    <subcellularLocation>
        <location evidence="4">Cell membrane</location>
        <topology evidence="4">Lipid-anchor</topology>
        <orientation evidence="4">Cytoplasmic side</orientation>
    </subcellularLocation>
</comment>
<comment type="similarity">
    <text evidence="4">Belongs to the synaptobrevin family.</text>
</comment>
<reference key="1">
    <citation type="journal article" date="2004" name="Science">
        <title>The Ashbya gossypii genome as a tool for mapping the ancient Saccharomyces cerevisiae genome.</title>
        <authorList>
            <person name="Dietrich F.S."/>
            <person name="Voegeli S."/>
            <person name="Brachat S."/>
            <person name="Lerch A."/>
            <person name="Gates K."/>
            <person name="Steiner S."/>
            <person name="Mohr C."/>
            <person name="Poehlmann R."/>
            <person name="Luedi P."/>
            <person name="Choi S."/>
            <person name="Wing R.A."/>
            <person name="Flavier A."/>
            <person name="Gaffney T.D."/>
            <person name="Philippsen P."/>
        </authorList>
    </citation>
    <scope>NUCLEOTIDE SEQUENCE [LARGE SCALE GENOMIC DNA]</scope>
    <source>
        <strain>ATCC 10895 / CBS 109.51 / FGSC 9923 / NRRL Y-1056</strain>
    </source>
</reference>
<reference key="2">
    <citation type="journal article" date="2013" name="G3 (Bethesda)">
        <title>Genomes of Ashbya fungi isolated from insects reveal four mating-type loci, numerous translocations, lack of transposons, and distinct gene duplications.</title>
        <authorList>
            <person name="Dietrich F.S."/>
            <person name="Voegeli S."/>
            <person name="Kuo S."/>
            <person name="Philippsen P."/>
        </authorList>
    </citation>
    <scope>GENOME REANNOTATION</scope>
    <source>
        <strain>ATCC 10895 / CBS 109.51 / FGSC 9923 / NRRL Y-1056</strain>
    </source>
</reference>